<organism>
    <name type="scientific">Bacillus cereus (strain AH187)</name>
    <dbReference type="NCBI Taxonomy" id="405534"/>
    <lineage>
        <taxon>Bacteria</taxon>
        <taxon>Bacillati</taxon>
        <taxon>Bacillota</taxon>
        <taxon>Bacilli</taxon>
        <taxon>Bacillales</taxon>
        <taxon>Bacillaceae</taxon>
        <taxon>Bacillus</taxon>
        <taxon>Bacillus cereus group</taxon>
    </lineage>
</organism>
<sequence>MGYYSLTEVTAVQYAKEHGYFEKKANVVCHEIGDGNLNYVFKLDDGEKSIIIKQALPYAKVVGESWPLSIKRATIESKALQIFAKYVPEYVPVVYSHDEELAVTIIEDLSKLTITRKGLIDGEEYPLLSQHIGRFLANVLFYTSDFGLQSEEKRVLEGTFVNPDLCKITEDLVFTDPFGHYDTNDYESELQLAVDELWSDKTLKLKVAQYKYKFLTRKEALIHGDLHTGSIFSSPSETKVIDPEFATYGPFGFDIGQFIANLLLNALSREEEQRSVLFFHIEKTWSYFVDTFTKLWIGEGVEAYTKEKQWLPIILQNIFTDVVGFAGCELIRRTIGLAHVADLDEIANKETRIQAKKQALSLGRELIKYESKNADIQLFRALFQQTVSGGVKA</sequence>
<proteinExistence type="inferred from homology"/>
<comment type="function">
    <text evidence="1">Catalyzes the phosphorylation of methylthioribose into methylthioribose-1-phosphate.</text>
</comment>
<comment type="catalytic activity">
    <reaction evidence="1">
        <text>5-(methylsulfanyl)-D-ribose + ATP = 5-(methylsulfanyl)-alpha-D-ribose 1-phosphate + ADP + H(+)</text>
        <dbReference type="Rhea" id="RHEA:22312"/>
        <dbReference type="ChEBI" id="CHEBI:15378"/>
        <dbReference type="ChEBI" id="CHEBI:30616"/>
        <dbReference type="ChEBI" id="CHEBI:58533"/>
        <dbReference type="ChEBI" id="CHEBI:78440"/>
        <dbReference type="ChEBI" id="CHEBI:456216"/>
        <dbReference type="EC" id="2.7.1.100"/>
    </reaction>
</comment>
<comment type="pathway">
    <text evidence="1">Amino-acid biosynthesis; L-methionine biosynthesis via salvage pathway; S-methyl-5-thio-alpha-D-ribose 1-phosphate from S-methyl-5'-thioadenosine (hydrolase route): step 2/2.</text>
</comment>
<comment type="subunit">
    <text evidence="1">Homodimer.</text>
</comment>
<comment type="similarity">
    <text evidence="1">Belongs to the methylthioribose kinase family.</text>
</comment>
<dbReference type="EC" id="2.7.1.100" evidence="1"/>
<dbReference type="EMBL" id="CP001177">
    <property type="protein sequence ID" value="ACJ77857.1"/>
    <property type="molecule type" value="Genomic_DNA"/>
</dbReference>
<dbReference type="SMR" id="B7HN10"/>
<dbReference type="KEGG" id="bcr:BCAH187_A4160"/>
<dbReference type="HOGENOM" id="CLU_033681_0_0_9"/>
<dbReference type="UniPathway" id="UPA00904">
    <property type="reaction ID" value="UER00872"/>
</dbReference>
<dbReference type="Proteomes" id="UP000002214">
    <property type="component" value="Chromosome"/>
</dbReference>
<dbReference type="GO" id="GO:0005524">
    <property type="term" value="F:ATP binding"/>
    <property type="evidence" value="ECO:0007669"/>
    <property type="project" value="UniProtKB-UniRule"/>
</dbReference>
<dbReference type="GO" id="GO:0046522">
    <property type="term" value="F:S-methyl-5-thioribose kinase activity"/>
    <property type="evidence" value="ECO:0007669"/>
    <property type="project" value="UniProtKB-UniRule"/>
</dbReference>
<dbReference type="GO" id="GO:0019509">
    <property type="term" value="P:L-methionine salvage from methylthioadenosine"/>
    <property type="evidence" value="ECO:0007669"/>
    <property type="project" value="UniProtKB-UniRule"/>
</dbReference>
<dbReference type="FunFam" id="3.30.200.20:FF:000436">
    <property type="entry name" value="Methylthioribose kinase"/>
    <property type="match status" value="1"/>
</dbReference>
<dbReference type="FunFam" id="3.90.1200.10:FF:000008">
    <property type="entry name" value="Methylthioribose kinase"/>
    <property type="match status" value="1"/>
</dbReference>
<dbReference type="Gene3D" id="3.90.1200.10">
    <property type="match status" value="1"/>
</dbReference>
<dbReference type="Gene3D" id="3.30.200.20">
    <property type="entry name" value="Phosphorylase Kinase, domain 1"/>
    <property type="match status" value="1"/>
</dbReference>
<dbReference type="HAMAP" id="MF_01683">
    <property type="entry name" value="Salvage_MtnK"/>
    <property type="match status" value="1"/>
</dbReference>
<dbReference type="InterPro" id="IPR002575">
    <property type="entry name" value="Aminoglycoside_PTrfase"/>
</dbReference>
<dbReference type="InterPro" id="IPR011009">
    <property type="entry name" value="Kinase-like_dom_sf"/>
</dbReference>
<dbReference type="InterPro" id="IPR009212">
    <property type="entry name" value="Methylthioribose_kinase"/>
</dbReference>
<dbReference type="NCBIfam" id="TIGR01767">
    <property type="entry name" value="MTRK"/>
    <property type="match status" value="1"/>
</dbReference>
<dbReference type="PANTHER" id="PTHR34273">
    <property type="entry name" value="METHYLTHIORIBOSE KINASE"/>
    <property type="match status" value="1"/>
</dbReference>
<dbReference type="PANTHER" id="PTHR34273:SF2">
    <property type="entry name" value="METHYLTHIORIBOSE KINASE"/>
    <property type="match status" value="1"/>
</dbReference>
<dbReference type="Pfam" id="PF01636">
    <property type="entry name" value="APH"/>
    <property type="match status" value="1"/>
</dbReference>
<dbReference type="PIRSF" id="PIRSF031134">
    <property type="entry name" value="MTRK"/>
    <property type="match status" value="1"/>
</dbReference>
<dbReference type="SUPFAM" id="SSF56112">
    <property type="entry name" value="Protein kinase-like (PK-like)"/>
    <property type="match status" value="1"/>
</dbReference>
<protein>
    <recommendedName>
        <fullName evidence="1">Methylthioribose kinase</fullName>
        <shortName evidence="1">MTR kinase</shortName>
        <ecNumber evidence="1">2.7.1.100</ecNumber>
    </recommendedName>
</protein>
<keyword id="KW-0028">Amino-acid biosynthesis</keyword>
<keyword id="KW-0067">ATP-binding</keyword>
<keyword id="KW-0418">Kinase</keyword>
<keyword id="KW-0486">Methionine biosynthesis</keyword>
<keyword id="KW-0547">Nucleotide-binding</keyword>
<keyword id="KW-0808">Transferase</keyword>
<name>MTNK_BACC7</name>
<feature type="chain" id="PRO_1000187402" description="Methylthioribose kinase">
    <location>
        <begin position="1"/>
        <end position="393"/>
    </location>
</feature>
<feature type="binding site" evidence="1">
    <location>
        <position position="38"/>
    </location>
    <ligand>
        <name>ATP</name>
        <dbReference type="ChEBI" id="CHEBI:30616"/>
    </ligand>
</feature>
<feature type="binding site" evidence="1">
    <location>
        <position position="53"/>
    </location>
    <ligand>
        <name>ATP</name>
        <dbReference type="ChEBI" id="CHEBI:30616"/>
    </ligand>
</feature>
<feature type="binding site" evidence="1">
    <location>
        <begin position="107"/>
        <end position="109"/>
    </location>
    <ligand>
        <name>ATP</name>
        <dbReference type="ChEBI" id="CHEBI:30616"/>
    </ligand>
</feature>
<feature type="binding site" evidence="1">
    <location>
        <position position="225"/>
    </location>
    <ligand>
        <name>substrate</name>
    </ligand>
</feature>
<feature type="binding site" evidence="1">
    <location>
        <begin position="242"/>
        <end position="244"/>
    </location>
    <ligand>
        <name>ATP</name>
        <dbReference type="ChEBI" id="CHEBI:30616"/>
    </ligand>
</feature>
<feature type="binding site" evidence="1">
    <location>
        <position position="332"/>
    </location>
    <ligand>
        <name>substrate</name>
    </ligand>
</feature>
<accession>B7HN10</accession>
<reference key="1">
    <citation type="submission" date="2008-10" db="EMBL/GenBank/DDBJ databases">
        <title>Genome sequence of Bacillus cereus AH187.</title>
        <authorList>
            <person name="Dodson R.J."/>
            <person name="Durkin A.S."/>
            <person name="Rosovitz M.J."/>
            <person name="Rasko D.A."/>
            <person name="Kolsto A.B."/>
            <person name="Okstad O.A."/>
            <person name="Ravel J."/>
            <person name="Sutton G."/>
        </authorList>
    </citation>
    <scope>NUCLEOTIDE SEQUENCE [LARGE SCALE GENOMIC DNA]</scope>
    <source>
        <strain>AH187</strain>
    </source>
</reference>
<evidence type="ECO:0000255" key="1">
    <source>
        <dbReference type="HAMAP-Rule" id="MF_01683"/>
    </source>
</evidence>
<gene>
    <name evidence="1" type="primary">mtnK</name>
    <name type="ordered locus">BCAH187_A4160</name>
</gene>